<comment type="function">
    <text evidence="1">Part of the Sec protein translocase complex. Interacts with the SecYEG preprotein conducting channel. Has a central role in coupling the hydrolysis of ATP to the transfer of proteins into and across the cell membrane, serving as an ATP-driven molecular motor driving the stepwise translocation of polypeptide chains across the membrane.</text>
</comment>
<comment type="catalytic activity">
    <reaction evidence="1">
        <text>ATP + H2O + cellular proteinSide 1 = ADP + phosphate + cellular proteinSide 2.</text>
        <dbReference type="EC" id="7.4.2.8"/>
    </reaction>
</comment>
<comment type="cofactor">
    <cofactor evidence="1">
        <name>Zn(2+)</name>
        <dbReference type="ChEBI" id="CHEBI:29105"/>
    </cofactor>
    <text evidence="1">May bind 1 zinc ion per subunit.</text>
</comment>
<comment type="subunit">
    <text evidence="1">Monomer and homodimer. Part of the essential Sec protein translocation apparatus which comprises SecA, SecYEG and auxiliary proteins SecDF. Other proteins may also be involved.</text>
</comment>
<comment type="subcellular location">
    <subcellularLocation>
        <location evidence="1">Cell inner membrane</location>
        <topology evidence="1">Peripheral membrane protein</topology>
        <orientation evidence="1">Cytoplasmic side</orientation>
    </subcellularLocation>
    <subcellularLocation>
        <location evidence="1">Cytoplasm</location>
    </subcellularLocation>
    <text evidence="1">Distribution is 50-50.</text>
</comment>
<comment type="similarity">
    <text evidence="1">Belongs to the SecA family.</text>
</comment>
<organism>
    <name type="scientific">Treponema denticola (strain ATCC 35405 / DSM 14222 / CIP 103919 / JCM 8153 / KCTC 15104)</name>
    <dbReference type="NCBI Taxonomy" id="243275"/>
    <lineage>
        <taxon>Bacteria</taxon>
        <taxon>Pseudomonadati</taxon>
        <taxon>Spirochaetota</taxon>
        <taxon>Spirochaetia</taxon>
        <taxon>Spirochaetales</taxon>
        <taxon>Treponemataceae</taxon>
        <taxon>Treponema</taxon>
    </lineage>
</organism>
<evidence type="ECO:0000255" key="1">
    <source>
        <dbReference type="HAMAP-Rule" id="MF_01382"/>
    </source>
</evidence>
<evidence type="ECO:0000256" key="2">
    <source>
        <dbReference type="SAM" id="MobiDB-lite"/>
    </source>
</evidence>
<keyword id="KW-0067">ATP-binding</keyword>
<keyword id="KW-0997">Cell inner membrane</keyword>
<keyword id="KW-1003">Cell membrane</keyword>
<keyword id="KW-0963">Cytoplasm</keyword>
<keyword id="KW-0472">Membrane</keyword>
<keyword id="KW-0479">Metal-binding</keyword>
<keyword id="KW-0547">Nucleotide-binding</keyword>
<keyword id="KW-0653">Protein transport</keyword>
<keyword id="KW-1185">Reference proteome</keyword>
<keyword id="KW-1278">Translocase</keyword>
<keyword id="KW-0811">Translocation</keyword>
<keyword id="KW-0813">Transport</keyword>
<keyword id="KW-0862">Zinc</keyword>
<reference key="1">
    <citation type="journal article" date="2004" name="Proc. Natl. Acad. Sci. U.S.A.">
        <title>Comparison of the genome of the oral pathogen Treponema denticola with other spirochete genomes.</title>
        <authorList>
            <person name="Seshadri R."/>
            <person name="Myers G.S.A."/>
            <person name="Tettelin H."/>
            <person name="Eisen J.A."/>
            <person name="Heidelberg J.F."/>
            <person name="Dodson R.J."/>
            <person name="Davidsen T.M."/>
            <person name="DeBoy R.T."/>
            <person name="Fouts D.E."/>
            <person name="Haft D.H."/>
            <person name="Selengut J."/>
            <person name="Ren Q."/>
            <person name="Brinkac L.M."/>
            <person name="Madupu R."/>
            <person name="Kolonay J.F."/>
            <person name="Durkin S.A."/>
            <person name="Daugherty S.C."/>
            <person name="Shetty J."/>
            <person name="Shvartsbeyn A."/>
            <person name="Gebregeorgis E."/>
            <person name="Geer K."/>
            <person name="Tsegaye G."/>
            <person name="Malek J.A."/>
            <person name="Ayodeji B."/>
            <person name="Shatsman S."/>
            <person name="McLeod M.P."/>
            <person name="Smajs D."/>
            <person name="Howell J.K."/>
            <person name="Pal S."/>
            <person name="Amin A."/>
            <person name="Vashisth P."/>
            <person name="McNeill T.Z."/>
            <person name="Xiang Q."/>
            <person name="Sodergren E."/>
            <person name="Baca E."/>
            <person name="Weinstock G.M."/>
            <person name="Norris S.J."/>
            <person name="Fraser C.M."/>
            <person name="Paulsen I.T."/>
        </authorList>
    </citation>
    <scope>NUCLEOTIDE SEQUENCE [LARGE SCALE GENOMIC DNA]</scope>
    <source>
        <strain>ATCC 35405 / DSM 14222 / CIP 103919 / JCM 8153 / KCTC 15104</strain>
    </source>
</reference>
<accession>Q73LG6</accession>
<protein>
    <recommendedName>
        <fullName evidence="1">Protein translocase subunit SecA</fullName>
        <ecNumber evidence="1">7.4.2.8</ecNumber>
    </recommendedName>
</protein>
<name>SECA_TREDE</name>
<gene>
    <name evidence="1" type="primary">secA</name>
    <name type="ordered locus">TDE_1898</name>
</gene>
<dbReference type="EC" id="7.4.2.8" evidence="1"/>
<dbReference type="EMBL" id="AE017226">
    <property type="protein sequence ID" value="AAS12412.1"/>
    <property type="molecule type" value="Genomic_DNA"/>
</dbReference>
<dbReference type="RefSeq" id="NP_972501.1">
    <property type="nucleotide sequence ID" value="NC_002967.9"/>
</dbReference>
<dbReference type="RefSeq" id="WP_002679596.1">
    <property type="nucleotide sequence ID" value="NC_002967.9"/>
</dbReference>
<dbReference type="SMR" id="Q73LG6"/>
<dbReference type="STRING" id="243275.TDE_1898"/>
<dbReference type="PaxDb" id="243275-TDE_1898"/>
<dbReference type="GeneID" id="2739127"/>
<dbReference type="KEGG" id="tde:TDE_1898"/>
<dbReference type="PATRIC" id="fig|243275.7.peg.1797"/>
<dbReference type="eggNOG" id="COG0653">
    <property type="taxonomic scope" value="Bacteria"/>
</dbReference>
<dbReference type="HOGENOM" id="CLU_005314_3_0_12"/>
<dbReference type="OrthoDB" id="9805579at2"/>
<dbReference type="Proteomes" id="UP000008212">
    <property type="component" value="Chromosome"/>
</dbReference>
<dbReference type="GO" id="GO:0031522">
    <property type="term" value="C:cell envelope Sec protein transport complex"/>
    <property type="evidence" value="ECO:0007669"/>
    <property type="project" value="TreeGrafter"/>
</dbReference>
<dbReference type="GO" id="GO:0005829">
    <property type="term" value="C:cytosol"/>
    <property type="evidence" value="ECO:0007669"/>
    <property type="project" value="TreeGrafter"/>
</dbReference>
<dbReference type="GO" id="GO:0005886">
    <property type="term" value="C:plasma membrane"/>
    <property type="evidence" value="ECO:0007669"/>
    <property type="project" value="UniProtKB-SubCell"/>
</dbReference>
<dbReference type="GO" id="GO:0005524">
    <property type="term" value="F:ATP binding"/>
    <property type="evidence" value="ECO:0007669"/>
    <property type="project" value="UniProtKB-UniRule"/>
</dbReference>
<dbReference type="GO" id="GO:0046872">
    <property type="term" value="F:metal ion binding"/>
    <property type="evidence" value="ECO:0007669"/>
    <property type="project" value="UniProtKB-KW"/>
</dbReference>
<dbReference type="GO" id="GO:0008564">
    <property type="term" value="F:protein-exporting ATPase activity"/>
    <property type="evidence" value="ECO:0007669"/>
    <property type="project" value="UniProtKB-EC"/>
</dbReference>
<dbReference type="GO" id="GO:0065002">
    <property type="term" value="P:intracellular protein transmembrane transport"/>
    <property type="evidence" value="ECO:0007669"/>
    <property type="project" value="UniProtKB-UniRule"/>
</dbReference>
<dbReference type="GO" id="GO:0017038">
    <property type="term" value="P:protein import"/>
    <property type="evidence" value="ECO:0007669"/>
    <property type="project" value="InterPro"/>
</dbReference>
<dbReference type="GO" id="GO:0006605">
    <property type="term" value="P:protein targeting"/>
    <property type="evidence" value="ECO:0007669"/>
    <property type="project" value="UniProtKB-UniRule"/>
</dbReference>
<dbReference type="GO" id="GO:0043952">
    <property type="term" value="P:protein transport by the Sec complex"/>
    <property type="evidence" value="ECO:0007669"/>
    <property type="project" value="TreeGrafter"/>
</dbReference>
<dbReference type="CDD" id="cd17928">
    <property type="entry name" value="DEXDc_SecA"/>
    <property type="match status" value="1"/>
</dbReference>
<dbReference type="CDD" id="cd18803">
    <property type="entry name" value="SF2_C_secA"/>
    <property type="match status" value="1"/>
</dbReference>
<dbReference type="FunFam" id="3.40.50.300:FF:000113">
    <property type="entry name" value="Preprotein translocase subunit SecA"/>
    <property type="match status" value="1"/>
</dbReference>
<dbReference type="FunFam" id="3.90.1440.10:FF:000001">
    <property type="entry name" value="Preprotein translocase subunit SecA"/>
    <property type="match status" value="1"/>
</dbReference>
<dbReference type="Gene3D" id="1.10.3060.10">
    <property type="entry name" value="Helical scaffold and wing domains of SecA"/>
    <property type="match status" value="1"/>
</dbReference>
<dbReference type="Gene3D" id="3.40.50.300">
    <property type="entry name" value="P-loop containing nucleotide triphosphate hydrolases"/>
    <property type="match status" value="2"/>
</dbReference>
<dbReference type="Gene3D" id="3.90.1440.10">
    <property type="entry name" value="SecA, preprotein cross-linking domain"/>
    <property type="match status" value="1"/>
</dbReference>
<dbReference type="HAMAP" id="MF_01382">
    <property type="entry name" value="SecA"/>
    <property type="match status" value="1"/>
</dbReference>
<dbReference type="InterPro" id="IPR014001">
    <property type="entry name" value="Helicase_ATP-bd"/>
</dbReference>
<dbReference type="InterPro" id="IPR001650">
    <property type="entry name" value="Helicase_C-like"/>
</dbReference>
<dbReference type="InterPro" id="IPR027417">
    <property type="entry name" value="P-loop_NTPase"/>
</dbReference>
<dbReference type="InterPro" id="IPR004027">
    <property type="entry name" value="SEC_C_motif"/>
</dbReference>
<dbReference type="InterPro" id="IPR000185">
    <property type="entry name" value="SecA"/>
</dbReference>
<dbReference type="InterPro" id="IPR020937">
    <property type="entry name" value="SecA_CS"/>
</dbReference>
<dbReference type="InterPro" id="IPR011115">
    <property type="entry name" value="SecA_DEAD"/>
</dbReference>
<dbReference type="InterPro" id="IPR014018">
    <property type="entry name" value="SecA_motor_DEAD"/>
</dbReference>
<dbReference type="InterPro" id="IPR011130">
    <property type="entry name" value="SecA_preprotein_X-link_dom"/>
</dbReference>
<dbReference type="InterPro" id="IPR044722">
    <property type="entry name" value="SecA_SF2_C"/>
</dbReference>
<dbReference type="InterPro" id="IPR011116">
    <property type="entry name" value="SecA_Wing/Scaffold"/>
</dbReference>
<dbReference type="InterPro" id="IPR036266">
    <property type="entry name" value="SecA_Wing/Scaffold_sf"/>
</dbReference>
<dbReference type="InterPro" id="IPR036670">
    <property type="entry name" value="SecA_X-link_sf"/>
</dbReference>
<dbReference type="NCBIfam" id="NF009538">
    <property type="entry name" value="PRK12904.1"/>
    <property type="match status" value="1"/>
</dbReference>
<dbReference type="NCBIfam" id="TIGR00963">
    <property type="entry name" value="secA"/>
    <property type="match status" value="1"/>
</dbReference>
<dbReference type="PANTHER" id="PTHR30612:SF0">
    <property type="entry name" value="CHLOROPLAST PROTEIN-TRANSPORTING ATPASE"/>
    <property type="match status" value="1"/>
</dbReference>
<dbReference type="PANTHER" id="PTHR30612">
    <property type="entry name" value="SECA INNER MEMBRANE COMPONENT OF SEC PROTEIN SECRETION SYSTEM"/>
    <property type="match status" value="1"/>
</dbReference>
<dbReference type="Pfam" id="PF21090">
    <property type="entry name" value="P-loop_SecA"/>
    <property type="match status" value="1"/>
</dbReference>
<dbReference type="Pfam" id="PF02810">
    <property type="entry name" value="SEC-C"/>
    <property type="match status" value="1"/>
</dbReference>
<dbReference type="Pfam" id="PF07517">
    <property type="entry name" value="SecA_DEAD"/>
    <property type="match status" value="1"/>
</dbReference>
<dbReference type="Pfam" id="PF01043">
    <property type="entry name" value="SecA_PP_bind"/>
    <property type="match status" value="1"/>
</dbReference>
<dbReference type="Pfam" id="PF07516">
    <property type="entry name" value="SecA_SW"/>
    <property type="match status" value="1"/>
</dbReference>
<dbReference type="PRINTS" id="PR00906">
    <property type="entry name" value="SECA"/>
</dbReference>
<dbReference type="SMART" id="SM00957">
    <property type="entry name" value="SecA_DEAD"/>
    <property type="match status" value="1"/>
</dbReference>
<dbReference type="SMART" id="SM00958">
    <property type="entry name" value="SecA_PP_bind"/>
    <property type="match status" value="1"/>
</dbReference>
<dbReference type="SUPFAM" id="SSF81886">
    <property type="entry name" value="Helical scaffold and wing domains of SecA"/>
    <property type="match status" value="1"/>
</dbReference>
<dbReference type="SUPFAM" id="SSF52540">
    <property type="entry name" value="P-loop containing nucleoside triphosphate hydrolases"/>
    <property type="match status" value="2"/>
</dbReference>
<dbReference type="SUPFAM" id="SSF81767">
    <property type="entry name" value="Pre-protein crosslinking domain of SecA"/>
    <property type="match status" value="1"/>
</dbReference>
<dbReference type="PROSITE" id="PS01312">
    <property type="entry name" value="SECA"/>
    <property type="match status" value="1"/>
</dbReference>
<dbReference type="PROSITE" id="PS51196">
    <property type="entry name" value="SECA_MOTOR_DEAD"/>
    <property type="match status" value="1"/>
</dbReference>
<proteinExistence type="inferred from homology"/>
<feature type="chain" id="PRO_0000321029" description="Protein translocase subunit SecA">
    <location>
        <begin position="1"/>
        <end position="922"/>
    </location>
</feature>
<feature type="region of interest" description="Disordered" evidence="2">
    <location>
        <begin position="850"/>
        <end position="891"/>
    </location>
</feature>
<feature type="compositionally biased region" description="Polar residues" evidence="2">
    <location>
        <begin position="854"/>
        <end position="865"/>
    </location>
</feature>
<feature type="binding site" evidence="1">
    <location>
        <position position="87"/>
    </location>
    <ligand>
        <name>ATP</name>
        <dbReference type="ChEBI" id="CHEBI:30616"/>
    </ligand>
</feature>
<feature type="binding site" evidence="1">
    <location>
        <begin position="105"/>
        <end position="109"/>
    </location>
    <ligand>
        <name>ATP</name>
        <dbReference type="ChEBI" id="CHEBI:30616"/>
    </ligand>
</feature>
<feature type="binding site" evidence="1">
    <location>
        <position position="519"/>
    </location>
    <ligand>
        <name>ATP</name>
        <dbReference type="ChEBI" id="CHEBI:30616"/>
    </ligand>
</feature>
<feature type="binding site" evidence="1">
    <location>
        <position position="906"/>
    </location>
    <ligand>
        <name>Zn(2+)</name>
        <dbReference type="ChEBI" id="CHEBI:29105"/>
    </ligand>
</feature>
<feature type="binding site" evidence="1">
    <location>
        <position position="908"/>
    </location>
    <ligand>
        <name>Zn(2+)</name>
        <dbReference type="ChEBI" id="CHEBI:29105"/>
    </ligand>
</feature>
<feature type="binding site" evidence="1">
    <location>
        <position position="917"/>
    </location>
    <ligand>
        <name>Zn(2+)</name>
        <dbReference type="ChEBI" id="CHEBI:29105"/>
    </ligand>
</feature>
<feature type="binding site" evidence="1">
    <location>
        <position position="918"/>
    </location>
    <ligand>
        <name>Zn(2+)</name>
        <dbReference type="ChEBI" id="CHEBI:29105"/>
    </ligand>
</feature>
<sequence>MLDSIIKILFGSKHERDIKAMLPILHKINEKEAWALSLSEEEFKAKTDEFRERYQKGESLDSFIPEAFALAREAARRILGERPYDVQILGSLVLHSGKIVEMKTGEGKTLMSVAAAYLNSLTGKGVHIVTVNDYLAERDADWMRPVYSYLGVSVGVILSNMENDARRIEYNCDITYGTNNEFGFDYLRDNMQMRLKDKTQREFSFAIVDEIDSILIDEARTPLIISGAAEDDTQRFFEVDRLIGQLKEVEKNPETGEYPNELEGEEVIGDYTIDEKSKRVSFTDSGMLHIQDILQRQGLIKSGNLFDEENFEYIHYFTQSVRAHVLFHIDVDYVIQDGQVQIVDEFTGRVLEGRRYSDGLHQAIEAKEHIKIAQRNRTLATITFQNFFRMYDKLSGMTGTADTEAVEFTKIYNLDVVVIPTNLPVARKDEHDVIYLNENDKFEALCTEISEAYKRGQPVLVGTVSIEKSELISKLLTKRGVRHEVLNAKNHEREALIIAEAGAKGSVTIATNMAGRGTDIKLGGSPEMRAKKRTGTNPNPDYYEKVLAEEYAKWQSDYNEVKELGGLYVIGTERHESRRIDNQLRGRSGRQGDPGRSKFFLSLDDDLMRLFGGENLKNVMSKIGMRAGEPIEHPWINKSIEKAQTKVENRNFDIRKHLLEYDDVLNEQRSFIYEQRNAILEDENLIERIYATLEEFISEKFDEYSSSSKAEKEERARLIKDIFREKFSYTLTEEDFANIDKKNHEEEINEFVEHFTKELKEKEALAGKENLNMFIRYQYLQAIDKKWLDHLENLESLREAVYLRSYGQKNPLTEYKLEGFDIFYSMLDDIRIEIASRLVRVQISTEEEAHASRQMRSIQGNAQHNSMGSFSGSGHGMGPTALSARSRPENAQVVRTVPKVGRNDPCPCGSGKKYKYCCGKNG</sequence>